<name>FB96_ARATH</name>
<keyword id="KW-1185">Reference proteome</keyword>
<reference key="1">
    <citation type="journal article" date="1999" name="Nature">
        <title>Sequence and analysis of chromosome 2 of the plant Arabidopsis thaliana.</title>
        <authorList>
            <person name="Lin X."/>
            <person name="Kaul S."/>
            <person name="Rounsley S.D."/>
            <person name="Shea T.P."/>
            <person name="Benito M.-I."/>
            <person name="Town C.D."/>
            <person name="Fujii C.Y."/>
            <person name="Mason T.M."/>
            <person name="Bowman C.L."/>
            <person name="Barnstead M.E."/>
            <person name="Feldblyum T.V."/>
            <person name="Buell C.R."/>
            <person name="Ketchum K.A."/>
            <person name="Lee J.J."/>
            <person name="Ronning C.M."/>
            <person name="Koo H.L."/>
            <person name="Moffat K.S."/>
            <person name="Cronin L.A."/>
            <person name="Shen M."/>
            <person name="Pai G."/>
            <person name="Van Aken S."/>
            <person name="Umayam L."/>
            <person name="Tallon L.J."/>
            <person name="Gill J.E."/>
            <person name="Adams M.D."/>
            <person name="Carrera A.J."/>
            <person name="Creasy T.H."/>
            <person name="Goodman H.M."/>
            <person name="Somerville C.R."/>
            <person name="Copenhaver G.P."/>
            <person name="Preuss D."/>
            <person name="Nierman W.C."/>
            <person name="White O."/>
            <person name="Eisen J.A."/>
            <person name="Salzberg S.L."/>
            <person name="Fraser C.M."/>
            <person name="Venter J.C."/>
        </authorList>
    </citation>
    <scope>NUCLEOTIDE SEQUENCE [LARGE SCALE GENOMIC DNA]</scope>
    <source>
        <strain>cv. Columbia</strain>
    </source>
</reference>
<reference key="2">
    <citation type="journal article" date="2017" name="Plant J.">
        <title>Araport11: a complete reannotation of the Arabidopsis thaliana reference genome.</title>
        <authorList>
            <person name="Cheng C.Y."/>
            <person name="Krishnakumar V."/>
            <person name="Chan A.P."/>
            <person name="Thibaud-Nissen F."/>
            <person name="Schobel S."/>
            <person name="Town C.D."/>
        </authorList>
    </citation>
    <scope>GENOME REANNOTATION</scope>
    <source>
        <strain>cv. Columbia</strain>
    </source>
</reference>
<protein>
    <recommendedName>
        <fullName>Putative F-box protein At2g02890</fullName>
    </recommendedName>
</protein>
<proteinExistence type="predicted"/>
<dbReference type="EMBL" id="AC004138">
    <property type="protein sequence ID" value="AAC32910.1"/>
    <property type="molecule type" value="Genomic_DNA"/>
</dbReference>
<dbReference type="EMBL" id="CP002685">
    <property type="protein sequence ID" value="AEC05640.1"/>
    <property type="molecule type" value="Genomic_DNA"/>
</dbReference>
<dbReference type="PIR" id="B84442">
    <property type="entry name" value="B84442"/>
</dbReference>
<dbReference type="RefSeq" id="NP_178392.1">
    <property type="nucleotide sequence ID" value="NM_126344.1"/>
</dbReference>
<dbReference type="FunCoup" id="O80608">
    <property type="interactions" value="3"/>
</dbReference>
<dbReference type="iPTMnet" id="O80608"/>
<dbReference type="PaxDb" id="3702-AT2G02890.1"/>
<dbReference type="EnsemblPlants" id="AT2G02890.1">
    <property type="protein sequence ID" value="AT2G02890.1"/>
    <property type="gene ID" value="AT2G02890"/>
</dbReference>
<dbReference type="GeneID" id="814820"/>
<dbReference type="Gramene" id="AT2G02890.1">
    <property type="protein sequence ID" value="AT2G02890.1"/>
    <property type="gene ID" value="AT2G02890"/>
</dbReference>
<dbReference type="KEGG" id="ath:AT2G02890"/>
<dbReference type="Araport" id="AT2G02890"/>
<dbReference type="TAIR" id="AT2G02890"/>
<dbReference type="eggNOG" id="ENOG502SNHU">
    <property type="taxonomic scope" value="Eukaryota"/>
</dbReference>
<dbReference type="HOGENOM" id="CLU_027176_9_0_1"/>
<dbReference type="InParanoid" id="O80608"/>
<dbReference type="OMA" id="DIHEICY"/>
<dbReference type="PhylomeDB" id="O80608"/>
<dbReference type="PRO" id="PR:O80608"/>
<dbReference type="Proteomes" id="UP000006548">
    <property type="component" value="Chromosome 2"/>
</dbReference>
<dbReference type="ExpressionAtlas" id="O80608">
    <property type="expression patterns" value="baseline and differential"/>
</dbReference>
<dbReference type="CDD" id="cd22157">
    <property type="entry name" value="F-box_AtFBW1-like"/>
    <property type="match status" value="1"/>
</dbReference>
<dbReference type="InterPro" id="IPR013187">
    <property type="entry name" value="F-box-assoc_dom_typ3"/>
</dbReference>
<dbReference type="InterPro" id="IPR017451">
    <property type="entry name" value="F-box-assoc_interact_dom"/>
</dbReference>
<dbReference type="InterPro" id="IPR036047">
    <property type="entry name" value="F-box-like_dom_sf"/>
</dbReference>
<dbReference type="InterPro" id="IPR001810">
    <property type="entry name" value="F-box_dom"/>
</dbReference>
<dbReference type="NCBIfam" id="TIGR01640">
    <property type="entry name" value="F_box_assoc_1"/>
    <property type="match status" value="1"/>
</dbReference>
<dbReference type="PANTHER" id="PTHR31111">
    <property type="entry name" value="BNAA05G37150D PROTEIN-RELATED"/>
    <property type="match status" value="1"/>
</dbReference>
<dbReference type="PANTHER" id="PTHR31111:SF130">
    <property type="entry name" value="F-BOX ASSOCIATED UBIQUITINATION EFFECTOR FAMILY PROTEIN"/>
    <property type="match status" value="1"/>
</dbReference>
<dbReference type="Pfam" id="PF00646">
    <property type="entry name" value="F-box"/>
    <property type="match status" value="1"/>
</dbReference>
<dbReference type="Pfam" id="PF08268">
    <property type="entry name" value="FBA_3"/>
    <property type="match status" value="1"/>
</dbReference>
<dbReference type="SMART" id="SM00256">
    <property type="entry name" value="FBOX"/>
    <property type="match status" value="1"/>
</dbReference>
<dbReference type="SUPFAM" id="SSF81383">
    <property type="entry name" value="F-box domain"/>
    <property type="match status" value="1"/>
</dbReference>
<feature type="chain" id="PRO_0000283369" description="Putative F-box protein At2g02890">
    <location>
        <begin position="1"/>
        <end position="531"/>
    </location>
</feature>
<feature type="domain" description="F-box">
    <location>
        <begin position="141"/>
        <end position="188"/>
    </location>
</feature>
<organism>
    <name type="scientific">Arabidopsis thaliana</name>
    <name type="common">Mouse-ear cress</name>
    <dbReference type="NCBI Taxonomy" id="3702"/>
    <lineage>
        <taxon>Eukaryota</taxon>
        <taxon>Viridiplantae</taxon>
        <taxon>Streptophyta</taxon>
        <taxon>Embryophyta</taxon>
        <taxon>Tracheophyta</taxon>
        <taxon>Spermatophyta</taxon>
        <taxon>Magnoliopsida</taxon>
        <taxon>eudicotyledons</taxon>
        <taxon>Gunneridae</taxon>
        <taxon>Pentapetalae</taxon>
        <taxon>rosids</taxon>
        <taxon>malvids</taxon>
        <taxon>Brassicales</taxon>
        <taxon>Brassicaceae</taxon>
        <taxon>Camelineae</taxon>
        <taxon>Arabidopsis</taxon>
    </lineage>
</organism>
<gene>
    <name type="ordered locus">At2g02890</name>
    <name type="ORF">T17M13.6</name>
</gene>
<sequence length="531" mass="60428">MLCTGSNASTIIQEQKHQQDSASADHRSTLLGLETELKKDSRSLLFSCCCLALAWAAALPRASAAARSALTLASAFTLSLASTAAFSVFSLASAYAPALLCFCETFGSLKGYEVENHMNASVTMLEEAIMYSSFSSKKRIRHSSSLTNDLIEEILSRLHSKSVARFRCVSKQCASMFASPYFKKLFQTRSSAKPSLLFAIADYGIEEDYSMKFFSSPQLENTYEKTSSTLVAAAEFHVKFSPDKSIPIYLSEDPRYVSIGYASGLIYNYCGRYVGRPLICNPNTGRYAILPYRYTYRKAYSFFGFDPIDKQYKALSLPYVDGPGRSKVLTFGAGDLTWRNIKSHTEDISYRYYEYVIVCFDVTSEKFTFVGVQKFCLLINYKGKLDVIYWEDDVDIHEICYFAKDLDEYLDENLDADATNELHVWVLEDVEKQEWSKYAYTWTDDTFFHRHLSIAGATASGEIVFSMRKYTSKQPFYVFYFNPERNTLQRVEIQGFGEAFRTTCSVRTFVNHIEDLDVNDLEQLNYIGTRR</sequence>
<accession>O80608</accession>